<proteinExistence type="evidence at protein level"/>
<feature type="chain" id="PRO_0000317666" description="Dynein axonemal heavy chain 7">
    <location>
        <begin position="1"/>
        <end position="4024"/>
    </location>
</feature>
<feature type="region of interest" description="Stem" evidence="1">
    <location>
        <begin position="1"/>
        <end position="1289"/>
    </location>
</feature>
<feature type="region of interest" description="Disordered" evidence="3">
    <location>
        <begin position="1"/>
        <end position="25"/>
    </location>
</feature>
<feature type="region of interest" description="Disordered" evidence="3">
    <location>
        <begin position="49"/>
        <end position="121"/>
    </location>
</feature>
<feature type="region of interest" description="AAA 1" evidence="1">
    <location>
        <begin position="1290"/>
        <end position="1511"/>
    </location>
</feature>
<feature type="region of interest" description="AAA 2" evidence="1">
    <location>
        <begin position="1571"/>
        <end position="1802"/>
    </location>
</feature>
<feature type="region of interest" description="AAA 3" evidence="1">
    <location>
        <begin position="1938"/>
        <end position="2189"/>
    </location>
</feature>
<feature type="region of interest" description="AAA 4" evidence="1">
    <location>
        <begin position="2302"/>
        <end position="2555"/>
    </location>
</feature>
<feature type="region of interest" description="Stalk" evidence="1">
    <location>
        <begin position="2572"/>
        <end position="2873"/>
    </location>
</feature>
<feature type="region of interest" description="AAA 5" evidence="1">
    <location>
        <begin position="2954"/>
        <end position="3184"/>
    </location>
</feature>
<feature type="region of interest" description="AAA 6" evidence="1">
    <location>
        <begin position="3397"/>
        <end position="3620"/>
    </location>
</feature>
<feature type="coiled-coil region" evidence="2">
    <location>
        <begin position="685"/>
        <end position="745"/>
    </location>
</feature>
<feature type="coiled-coil region" evidence="2">
    <location>
        <begin position="2827"/>
        <end position="2883"/>
    </location>
</feature>
<feature type="compositionally biased region" description="Basic and acidic residues" evidence="3">
    <location>
        <begin position="1"/>
        <end position="12"/>
    </location>
</feature>
<feature type="compositionally biased region" description="Basic and acidic residues" evidence="3">
    <location>
        <begin position="80"/>
        <end position="91"/>
    </location>
</feature>
<feature type="binding site" evidence="2">
    <location>
        <begin position="132"/>
        <end position="139"/>
    </location>
    <ligand>
        <name>ATP</name>
        <dbReference type="ChEBI" id="CHEBI:30616"/>
    </ligand>
</feature>
<feature type="binding site" evidence="2">
    <location>
        <begin position="1328"/>
        <end position="1335"/>
    </location>
    <ligand>
        <name>ATP</name>
        <dbReference type="ChEBI" id="CHEBI:30616"/>
    </ligand>
</feature>
<feature type="binding site" evidence="2">
    <location>
        <begin position="1609"/>
        <end position="1616"/>
    </location>
    <ligand>
        <name>ATP</name>
        <dbReference type="ChEBI" id="CHEBI:30616"/>
    </ligand>
</feature>
<feature type="binding site" evidence="2">
    <location>
        <begin position="1976"/>
        <end position="1983"/>
    </location>
    <ligand>
        <name>ATP</name>
        <dbReference type="ChEBI" id="CHEBI:30616"/>
    </ligand>
</feature>
<feature type="binding site" evidence="2">
    <location>
        <begin position="2341"/>
        <end position="2348"/>
    </location>
    <ligand>
        <name>ATP</name>
        <dbReference type="ChEBI" id="CHEBI:30616"/>
    </ligand>
</feature>
<feature type="splice variant" id="VSP_031131" description="In isoform 2." evidence="10">
    <location>
        <begin position="1"/>
        <end position="3517"/>
    </location>
</feature>
<feature type="splice variant" id="VSP_031132" description="In isoform 3." evidence="11">
    <location>
        <begin position="1"/>
        <end position="1452"/>
    </location>
</feature>
<feature type="splice variant" id="VSP_031133" description="In isoform 4." evidence="9">
    <original>ESKSKPTTLKPIILNEIVDAHKEKIKEVIMKESVAPTEHLRLYDKYDFLI</original>
    <variation>RNKAKPGHFYFSHIQRSVTFQHSEVSSPQNSHFKIVSPFSVLGFTWRCQL</variation>
    <location>
        <begin position="452"/>
        <end position="501"/>
    </location>
</feature>
<feature type="splice variant" id="VSP_031134" description="In isoform 4." evidence="9">
    <location>
        <begin position="502"/>
        <end position="4024"/>
    </location>
</feature>
<feature type="splice variant" id="VSP_031135" description="In isoform 3." evidence="11">
    <original>GLMEENK</original>
    <variation>ASILLMH</variation>
    <location>
        <begin position="1633"/>
        <end position="1639"/>
    </location>
</feature>
<feature type="splice variant" id="VSP_031136" description="In isoform 3." evidence="11">
    <location>
        <begin position="1640"/>
        <end position="4024"/>
    </location>
</feature>
<feature type="sequence variant" id="VAR_038580" description="In dbSNP:rs1072599.">
    <original>H</original>
    <variation>P</variation>
    <location>
        <position position="169"/>
    </location>
</feature>
<feature type="sequence variant" id="VAR_038581" description="In dbSNP:rs2375643.">
    <original>A</original>
    <variation>T</variation>
    <location>
        <position position="280"/>
    </location>
</feature>
<feature type="sequence variant" id="VAR_038582" description="In dbSNP:rs17838596.">
    <original>I</original>
    <variation>V</variation>
    <location>
        <position position="315"/>
    </location>
</feature>
<feature type="sequence variant" id="VAR_038583" description="In dbSNP:rs16843720.">
    <original>S</original>
    <variation>N</variation>
    <location>
        <position position="438"/>
    </location>
</feature>
<feature type="sequence variant" id="VAR_038584" description="In dbSNP:rs10931715." evidence="4">
    <original>R</original>
    <variation>C</variation>
    <location>
        <position position="545"/>
    </location>
</feature>
<feature type="sequence variant" id="VAR_038585" description="In dbSNP:rs2635718.">
    <original>D</original>
    <variation>H</variation>
    <location>
        <position position="565"/>
    </location>
</feature>
<feature type="sequence variant" id="VAR_038586" description="In dbSNP:rs10198893.">
    <original>K</original>
    <variation>E</variation>
    <location>
        <position position="675"/>
    </location>
</feature>
<feature type="sequence variant" id="VAR_038587" description="In dbSNP:rs6719500.">
    <original>K</original>
    <variation>E</variation>
    <location>
        <position position="825"/>
    </location>
</feature>
<feature type="sequence variant" id="VAR_038588" description="In dbSNP:rs168192.">
    <original>P</original>
    <variation>T</variation>
    <location>
        <position position="1422"/>
    </location>
</feature>
<feature type="sequence variant" id="VAR_038589" description="In dbSNP:rs13415574.">
    <original>E</original>
    <variation>K</variation>
    <location>
        <position position="1525"/>
    </location>
</feature>
<feature type="sequence variant" id="VAR_088453" description="In CILD50; uncertain significance; dbSNP:rs118190947." evidence="7">
    <original>D</original>
    <variation>N</variation>
    <location>
        <position position="1863"/>
    </location>
</feature>
<feature type="sequence variant" id="VAR_038590" description="In dbSNP:rs13034775.">
    <original>R</original>
    <variation>Q</variation>
    <location>
        <position position="1886"/>
    </location>
</feature>
<feature type="sequence variant" id="VAR_038591" description="In dbSNP:rs2375544.">
    <original>P</original>
    <variation>L</variation>
    <location>
        <position position="1940"/>
    </location>
</feature>
<feature type="sequence variant" id="VAR_038592" description="In dbSNP:rs2889109.">
    <original>P</original>
    <variation>L</variation>
    <location>
        <position position="1971"/>
    </location>
</feature>
<feature type="sequence variant" id="VAR_038593" description="In dbSNP:rs10184131.">
    <original>M</original>
    <variation>T</variation>
    <location>
        <position position="2020"/>
    </location>
</feature>
<feature type="sequence variant" id="VAR_088454" description="In CILD50; uncertain significance; dbSNP:rs192120666." evidence="7">
    <original>M</original>
    <variation>I</variation>
    <location>
        <position position="2164"/>
    </location>
</feature>
<feature type="sequence variant" id="VAR_038594" description="In dbSNP:rs16841199.">
    <original>N</original>
    <variation>K</variation>
    <location>
        <position position="2459"/>
    </location>
</feature>
<feature type="sequence variant" id="VAR_038595" description="In dbSNP:rs2293066.">
    <original>T</original>
    <variation>I</variation>
    <location>
        <position position="2569"/>
    </location>
</feature>
<feature type="sequence variant" id="VAR_038596" description="In dbSNP:rs16841018.">
    <original>I</original>
    <variation>V</variation>
    <location>
        <position position="2809"/>
    </location>
</feature>
<feature type="sequence variant" id="VAR_088455" description="In CILD50; uncertain significance; dbSNP:rs199798030." evidence="7">
    <original>R</original>
    <variation>H</variation>
    <location>
        <position position="3204"/>
    </location>
</feature>
<feature type="sequence variant" id="VAR_038597" description="In dbSNP:rs13411834." evidence="4 6">
    <original>L</original>
    <variation>P</variation>
    <location>
        <position position="3319"/>
    </location>
</feature>
<feature type="sequence variant" id="VAR_038598" description="In dbSNP:rs6708527.">
    <original>R</original>
    <variation>H</variation>
    <location>
        <position position="3386"/>
    </location>
</feature>
<feature type="sequence variant" id="VAR_088456" description="In CILD50; uncertain significance." evidence="7">
    <original>G</original>
    <variation>S</variation>
    <location>
        <position position="3464"/>
    </location>
</feature>
<feature type="sequence variant" id="VAR_088457" description="In CILD50; uncertain significance; dbSNP:rs1696041485." evidence="7">
    <original>Q</original>
    <variation>R</variation>
    <location>
        <position position="3534"/>
    </location>
</feature>
<feature type="sequence conflict" description="In Ref. 4; BAC04372." evidence="12" ref="4">
    <original>M</original>
    <variation>V</variation>
    <location>
        <position position="433"/>
    </location>
</feature>
<feature type="sequence conflict" description="In Ref. 2; BAA76788." evidence="12" ref="2">
    <original>I</original>
    <variation>T</variation>
    <location>
        <position position="1020"/>
    </location>
</feature>
<feature type="sequence conflict" description="In Ref. 8; CAA10557." evidence="12" ref="8">
    <original>Y</original>
    <variation>F</variation>
    <location>
        <position position="1292"/>
    </location>
</feature>
<feature type="sequence conflict" description="In Ref. 9; CAB06055." evidence="12" ref="9">
    <original>N</original>
    <variation>D</variation>
    <location>
        <position position="1353"/>
    </location>
</feature>
<feature type="sequence conflict" description="In Ref. 9; CAB06055." evidence="12" ref="9">
    <original>S</original>
    <variation>P</variation>
    <location>
        <position position="1355"/>
    </location>
</feature>
<feature type="sequence conflict" description="In Ref. 5; CAH18445." evidence="12" ref="5">
    <original>Y</original>
    <variation>H</variation>
    <location>
        <position position="1467"/>
    </location>
</feature>
<feature type="sequence conflict" description="In Ref. 9; CAB06055." evidence="12" ref="9">
    <original>M</original>
    <variation>L</variation>
    <location>
        <position position="1502"/>
    </location>
</feature>
<feature type="sequence conflict" description="In Ref. 7; AAH29567." evidence="12" ref="7">
    <original>P</original>
    <variation>L</variation>
    <location>
        <position position="3563"/>
    </location>
</feature>
<name>DYH7_HUMAN</name>
<comment type="function">
    <text evidence="1 7">Force generating protein that plays an important role in respiratory cilia and sperm flagella beating (PubMed:34476482). Produces force towards the minus ends of microtubules. Dynein has ATPase activity; the force-producing power stroke is thought to occur on release of ADP (By similarity).</text>
</comment>
<comment type="subunit">
    <text evidence="1">The dynein complex consists of at least two heavy chains and a number of intermediate and light chains.</text>
</comment>
<comment type="subcellular location">
    <subcellularLocation>
        <location evidence="6">Cytoplasm</location>
        <location evidence="6">Cytoskeleton</location>
        <location evidence="6">Cilium axoneme</location>
    </subcellularLocation>
    <subcellularLocation>
        <location evidence="7">Cell projection</location>
        <location evidence="7">Cilium</location>
        <location evidence="7">Flagellum</location>
    </subcellularLocation>
</comment>
<comment type="alternative products">
    <event type="alternative splicing"/>
    <isoform>
        <id>Q8WXX0-1</id>
        <name>1</name>
        <sequence type="displayed"/>
    </isoform>
    <isoform>
        <id>Q8WXX0-2</id>
        <name>2</name>
        <sequence type="described" ref="VSP_031131"/>
    </isoform>
    <isoform>
        <id>Q8WXX0-3</id>
        <name>3</name>
        <sequence type="described" ref="VSP_031132 VSP_031135 VSP_031136"/>
    </isoform>
    <isoform>
        <id>Q8WXX0-4</id>
        <name>4</name>
        <sequence type="described" ref="VSP_031133 VSP_031134"/>
    </isoform>
</comment>
<comment type="tissue specificity">
    <text evidence="5 6">Detected in brain, testis and trachea. Detected in bronchial cells (at protein level).</text>
</comment>
<comment type="induction">
    <text evidence="6">Up-regulated during ciliogenesis (at protein level).</text>
</comment>
<comment type="domain">
    <text evidence="1">Dynein heavy chains probably consist of an N-terminal stem (which binds cargo and interacts with other dynein components), and the head or motor domain. The motor contains six tandemly-linked AAA domains in the head, which form a ring. A stalk-like structure (formed by two of the coiled coil domains) protrudes between AAA 4 and AAA 5 and terminates in a microtubule-binding site. A seventh domain may also contribute to this ring; it is not clear whether the N-terminus or the C-terminus forms this extra domain. There are four well-conserved and two non-conserved ATPase sites, one per AAA domain. Probably only one of these (within AAA 1) actually hydrolyzes ATP, the others may serve a regulatory function (By similarity).</text>
</comment>
<comment type="disease" evidence="7 8">
    <disease id="DI-06669">
        <name>Ciliary dyskinesia, primary, 50</name>
        <acronym>CILD50</acronym>
        <description>A form of primary ciliary dyskinesia, a disorder characterized by abnormalities of motile cilia. Respiratory infections leading to chronic inflammation and bronchiectasis are recurrent, due to defects in the respiratory cilia. CILD50 is an autosomal recessive form characterized by chronic sinusitis and bronchitis as well as male infertility. Patient sperm have markedly reduced progressive motility, and multiple morphologic abnormalities of the flagella.</description>
        <dbReference type="MIM" id="620356"/>
    </disease>
    <text>The disease may be caused by variants affecting the gene represented in this entry.</text>
</comment>
<comment type="similarity">
    <text evidence="12">Belongs to the dynein heavy chain family.</text>
</comment>
<comment type="sequence caution" evidence="12">
    <conflict type="erroneous initiation">
        <sequence resource="EMBL-CDS" id="BAA76788"/>
    </conflict>
    <text>Extended N-terminus.</text>
</comment>
<comment type="sequence caution" evidence="12">
    <conflict type="frameshift">
        <sequence resource="EMBL-CDS" id="CAB06055"/>
    </conflict>
</comment>
<comment type="sequence caution" evidence="12">
    <conflict type="erroneous initiation">
        <sequence resource="EMBL-CDS" id="CAH18445"/>
    </conflict>
    <text>Extended N-terminus.</text>
</comment>
<comment type="sequence caution" evidence="12">
    <conflict type="erroneous translation">
        <sequence resource="EMBL-CDS" id="CAH18445"/>
    </conflict>
    <text>Wrong choice of CDS.</text>
</comment>
<sequence length="4024" mass="461159">MSSEQDKSASKEKSKKPVRFLPQLSMEKLASKEKFKAPARALPQLSMVSTKPHWQQAAPSFHLSVKQDDESPEPFSVKNEQSHAEYMERFGKKGKLPHQVDDSYVGPSTSKSKGKSPHKERENFRSTLVNVIMQQDADLDSAVPDGSTIPKPTASAIEKDILRYYYYIHHGIDTDHVAPMEDSWLEHVLDLVPQHLKVFTDSIVTLSDEMREDYLLSVRKSIVDFVLKDPREKGDDKKTDELPAHRAEMEILPKPWRKSFLAASSYIRDHLNAMNPTMLAVLDLWHTNFKKLRLVDIKEFHNCQDALELSSFQNIIMRHMDSAKETLLKMWFPEVQNIYYQGNKKKQLPTGDSSAKLESFFNCAAALMTLQLQDLTLVSMQDFTDLIAQPPDSVRAFEHPGFIMRLILDNDTIKFEPELSDYIDIFLNVYDVMIKAVSFVPRVETKLYSKWESKSKPTTLKPIILNEIVDAHKEKIKEVIMKESVAPTEHLRLYDKYDFLITRKAERDVDNFLAENHSYEKIIDEICKYQKLIEEIQYTSIKTIRLGMFEMHCEELIRALVKRADIICGKLLAKMFRDHQEVNTRLCDEFERIAEKALSTPPNTAELMEMKAYIQKVEVTDMIELEQRLVDSKNCLAFLIEYVNFSPADMRLNNSVFQWYGRMGEIFEEHRKIIKEKIEQYQEGLKLRCERFVEELESYAKQSEEFYSFGDLQDVQRYLKKAQILNGKLDLAADKIEQFNAEEEAFGWLPSVYPQRKKIQDGLNPYLRLYETAVEFSSNYRAWTEGPYHKVNPDQVEADIGNYWRGLYKLEKTFHDSPYALAMTKKVRSKVEDFKQHIPLIQVICNPGLRPRHWEAMSAIVGYPLQPSDDSTVSSFLDMNLEPYIDRFEGISEAASKEYSLEKAMEKMITEWDAVEFVIHSYRETGTFILASVDEIQMLLDDHIIKTQTMRGSPFIKPYEKQMREWEGKLLLLQEILDEWLKVQATWLYLEPIFSSPDIMSQMPEEGRRFTAVDKTWRDIMRSVMQDKHVLTVVTIDRMLERLKKSNELLELILKGLNEYLEKKRLFFPRFFFLSNDELLEILSETKDPTRVQPHLKKCFEGIAKVEFTETLDITHMKSSEGEVVELIEIISTAKARGQVEKWLVELERVMINSIHKVTGDATFAYTKYERINWVRDWPGQTVLCVSQIFWTKEVQTAIPMGIKALEQYLKTCNRQIDDIVTLVRGKLSMQNRVTLGALVVLDVHARDVLSSLVKKNISDDSDFEWLSQLRYYWQENHLETKMINAGLRYGYEYLGNSPRLVITPLTDRCYRTLFGALHLHLGGAPEGPAGTGKTETTKDLAKAVAKQCVVFNCSDGLDYLALGKFFKGLLSCGAWACFDEFNRIDLEVLSVVAQQILTIQRGINAGADILMFEGTELKLDPTCAVFITMNPGYAGRSELPDNLKALFRTVAMMVPDYAMIAEIVLYSCGFVTARPLSVKIVATYRLCSEQLSSQHHYDYGMRAVKSVLTAAGNLKLKYPNENEEILLLRSIIDVNLPKFLSHDLPLFEGITSDLFPGVKLPKPDYNDLLAAIKDNCASMNLQMTAFFSEKILQVYEMMIVRHGFMIVGEPFGGKTSAYRVLAGALNDICEKGLMEENKVQITVLNPKSVTMGQLYGQFDSVSHEWSDGVLAVSFRAFASSVTPDRKWLIFDGPVDAVWIENMNTVLDDNKKLCLMSGEIIQMSPQMNLIFEPMDLEVASPATVSRCGMIYMEPHMLGWRPLMLSWVNLLPASVSVIQKEFIMGLFDRMVPVSVEFIRKHTKELSPTSDTNLVRSLMNLIDCFMDDFADEVKLKERNDRETYSLLEGIFLFSLIWSVGASCTDDDRLKFNKILRELMESPISDRTRNTFKLQSGTEQTSSKALTVPFPEKGTIYDYQFVTEGIGKWEPWIKKLKEAPPIPKDVMFNEIIVPTLDTIRYSALMELLTTHQKPSIFVGPTGTGKSVYITNFLLNQLNKEIYKPLLINFSAQTTAAQTQNIVMSKLDKRRKGVFGPPLGKRMVVFVDDVNMPAREVYGAQPPIELLRQWLDHWNWYDLKDCSMIKLVDIQIMCAMGPPGGGRNPVTPRYMRHFNIITINEFSDKSMYTIFSRILTWHLEICYKFPDEFLDLTTQIVNGTMTLYKEAMKNLLPTPAKSHYLFNLRDFSRVIQGVCLSRPETTETTEVIKRLWVHEVLRVYYDRLLDNTDRSWLINYIQEILRNYMYEDFHELFQRLDFDNDGMVEADDLRSLMFCDFHDPKREDTNYREIADVDNLRMIVEIHLEEYNNISKKPMNLVLFRFAIEHISRISRILKQPRSHALLVGVGGSGRQSVTRLAAHMADYSVFQVEISKGYDTTEWHEDLKVILRKCAEGEMQGVFLFTDTQIKEESFLEDVSNLLNAGEIPNLFALDEKQEICDKMRQLDRQRDKTKQTDGSPIALFNMFIDHCRSQLHVVLAMSPIGDAFRNRLRKFPALVNCCTIDWFQSWPEDALQAVASRFLEEIEMSEEIRDGCIDMCKSFHTSTIDLSKSFFVELQRYNYVTPTSYLELISTFKLLLEKKRSEVMKMKKRYEVGLEKLDSASSQVATMQMELEALHPQLKVASKEVDEMMIMIEKESVEVAKTEKIVKADETIANEQAMASKAIKDECDADLAGALPILESALAALDTLTAQDITVVKSMKSPPAGVKLVMEAICILKGIKADKIPDPTGSGKKIEDFWGPAKRLLGDMRFLQSLHEYDKDNIPPAYMNIIRKNYIPNPDFVPEKIRNASTAAEGLCKWVIAMDSYDKVAKIVAPKKIKLAAAEGELKIAMDGLRKKQAALKEVQDKLARLQDTLELNKQKKADLENQVDLCSKKLERAEQLIGGLGGEKTRWSHTALELGQLYINLTGDILISSGVVAYLGAFTSTYRQNQTKEWTTLCKGRDIPCSDDCSLMGTLGEAVTIRTWNIAGLPSDSFSIDNGIIIMNARRWPLMIDPQSQANKWIKNMEKANSLYVIKLSEPDYVRTLENCIQFGTPVLLENVGEELDPILEPLLLKQTFKQGGSTCIRLGDSTIEYAPDFRFYITTKLRNPHYLPETSVKVTLLNFMITPEGMQDQLLGIVVAQERPDLEEEKQALILQGAENKRQLKEIEDKILEVLSSSEGNILEDETAIKILSSSKALANEISQKQEVAEETEKKIDTTRMGYRPIAIHSSILFFSLADLANIEPMYQYSLTWFINLFILSIENSEKSEILAKRLQILKDHFTYSLYVNVCRSLFEKDKLLFSFCLTINLLLHERAINKAEWRFLLTGGIGLDNPYANLCTWLPQKSWDEICRLDDLPAFKTIRREFMRLKDGWKKVYDSLEPHHEVFPEEWEDKANEFQRMLIIRCLRPDKVIPMLQEFIINRLGRAFIEPPPFDLAKAFGDSNCCAPLIFVLSPGADPMAALLKFADDQGYGGSKLSSLSLGQGQGPIAMKMLEKAVKEGTWVVLQNCHLATSWMPTLEKVCEELSPESTHPDFRMWLTSYPSPNFPVSVLQNGVKMTNEAPKGLRANIIRSYLMDPISDPEFFGSCKKPEEFKKLLYGLCFFHALVQERRKFGPLGWNIPYEFNETDLRISVQQLHMFLNQYEELPYEALRYMTGECNYGGRVTDDWDRRTLRSILNKFFNPELVENSDYKFDSSGIYFVPPSGDHKSYIEYTKTLPLTPAPEIFGMNANADITKDQSETQLLFDNILLTQSRSAGAGAKSSDEVVNEVASDILGKLPNNFDIEAAMRRYPTTYTQSMNTVLVQEMGRFNKLLKTIRDSCVNIQKAIKGLAVMSTDLEEVVSSILNVKIPEMWMGKSYPSLKPLGSYVNDFLARLKFLQQWYEVGPPPVFWLSGFFFTQAFLTGAQQNYARKYTIPIDLLGFDYEVMEDKEYKHPPEDGVFIHGLFLDGASWNRKIKKLAESHPKILYDTVPVMWLKPCKRADIPKRPSYVAPLYKTSERRGVLSTTGHSTNFVIAMTLPSDQPKEHWIGRGVALLCQLNS</sequence>
<dbReference type="EMBL" id="AF327442">
    <property type="protein sequence ID" value="AAL37427.1"/>
    <property type="molecule type" value="mRNA"/>
</dbReference>
<dbReference type="EMBL" id="AB023161">
    <property type="protein sequence ID" value="BAA76788.2"/>
    <property type="status" value="ALT_INIT"/>
    <property type="molecule type" value="mRNA"/>
</dbReference>
<dbReference type="EMBL" id="AK094515">
    <property type="protein sequence ID" value="BAC04372.1"/>
    <property type="molecule type" value="mRNA"/>
</dbReference>
<dbReference type="EMBL" id="CR749651">
    <property type="protein sequence ID" value="CAH18445.1"/>
    <property type="status" value="ALT_SEQ"/>
    <property type="molecule type" value="mRNA"/>
</dbReference>
<dbReference type="EMBL" id="AC013274">
    <property type="protein sequence ID" value="AAY14776.1"/>
    <property type="molecule type" value="Genomic_DNA"/>
</dbReference>
<dbReference type="EMBL" id="AC068919">
    <property type="protein sequence ID" value="AAY14995.1"/>
    <property type="molecule type" value="Genomic_DNA"/>
</dbReference>
<dbReference type="EMBL" id="AC104600">
    <property type="protein sequence ID" value="AAY24051.1"/>
    <property type="molecule type" value="Genomic_DNA"/>
</dbReference>
<dbReference type="EMBL" id="AC114760">
    <property type="status" value="NOT_ANNOTATED_CDS"/>
    <property type="molecule type" value="Genomic_DNA"/>
</dbReference>
<dbReference type="EMBL" id="BC029567">
    <property type="protein sequence ID" value="AAH29567.1"/>
    <property type="molecule type" value="mRNA"/>
</dbReference>
<dbReference type="EMBL" id="AJ132084">
    <property type="protein sequence ID" value="CAA10557.1"/>
    <property type="molecule type" value="mRNA"/>
</dbReference>
<dbReference type="EMBL" id="AJ132093">
    <property type="protein sequence ID" value="CAB46444.1"/>
    <property type="molecule type" value="Genomic_DNA"/>
</dbReference>
<dbReference type="EMBL" id="Z83801">
    <property type="protein sequence ID" value="CAB06055.1"/>
    <property type="status" value="ALT_FRAME"/>
    <property type="molecule type" value="mRNA"/>
</dbReference>
<dbReference type="CCDS" id="CCDS42794.1">
    <molecule id="Q8WXX0-1"/>
</dbReference>
<dbReference type="RefSeq" id="NP_061720.2">
    <molecule id="Q8WXX0-1"/>
    <property type="nucleotide sequence ID" value="NM_018897.3"/>
</dbReference>
<dbReference type="RefSeq" id="XP_011509789.1">
    <property type="nucleotide sequence ID" value="XM_011511487.2"/>
</dbReference>
<dbReference type="PDB" id="6RZA">
    <property type="method" value="EM"/>
    <property type="resolution" value="5.40 A"/>
    <property type="chains" value="X=2675-2812"/>
</dbReference>
<dbReference type="PDB" id="8J07">
    <property type="method" value="EM"/>
    <property type="resolution" value="4.10 A"/>
    <property type="chains" value="g2/g4=1-4024"/>
</dbReference>
<dbReference type="PDBsum" id="6RZA"/>
<dbReference type="PDBsum" id="8J07"/>
<dbReference type="EMDB" id="EMD-35888"/>
<dbReference type="SMR" id="Q8WXX0"/>
<dbReference type="BioGRID" id="121102">
    <property type="interactions" value="19"/>
</dbReference>
<dbReference type="FunCoup" id="Q8WXX0">
    <property type="interactions" value="115"/>
</dbReference>
<dbReference type="IntAct" id="Q8WXX0">
    <property type="interactions" value="6"/>
</dbReference>
<dbReference type="MINT" id="Q8WXX0"/>
<dbReference type="STRING" id="9606.ENSP00000311273"/>
<dbReference type="GlyGen" id="Q8WXX0">
    <property type="glycosylation" value="6 sites, 1 O-linked glycan (1 site)"/>
</dbReference>
<dbReference type="iPTMnet" id="Q8WXX0"/>
<dbReference type="PhosphoSitePlus" id="Q8WXX0"/>
<dbReference type="BioMuta" id="DNAH7"/>
<dbReference type="DMDM" id="311033375"/>
<dbReference type="jPOST" id="Q8WXX0"/>
<dbReference type="MassIVE" id="Q8WXX0"/>
<dbReference type="PaxDb" id="9606-ENSP00000311273"/>
<dbReference type="PeptideAtlas" id="Q8WXX0"/>
<dbReference type="ProteomicsDB" id="75108">
    <molecule id="Q8WXX0-1"/>
</dbReference>
<dbReference type="ProteomicsDB" id="75109">
    <molecule id="Q8WXX0-2"/>
</dbReference>
<dbReference type="ProteomicsDB" id="75110">
    <molecule id="Q8WXX0-3"/>
</dbReference>
<dbReference type="ProteomicsDB" id="75111">
    <molecule id="Q8WXX0-4"/>
</dbReference>
<dbReference type="ABCD" id="Q8WXX0">
    <property type="antibodies" value="1 sequenced antibody"/>
</dbReference>
<dbReference type="Antibodypedia" id="49680">
    <property type="antibodies" value="35 antibodies from 12 providers"/>
</dbReference>
<dbReference type="Ensembl" id="ENST00000312428.11">
    <molecule id="Q8WXX0-1"/>
    <property type="protein sequence ID" value="ENSP00000311273.6"/>
    <property type="gene ID" value="ENSG00000118997.14"/>
</dbReference>
<dbReference type="Ensembl" id="ENST00000409063.5">
    <molecule id="Q8WXX0-2"/>
    <property type="protein sequence ID" value="ENSP00000386912.1"/>
    <property type="gene ID" value="ENSG00000118997.14"/>
</dbReference>
<dbReference type="Ensembl" id="ENST00000410072.5">
    <molecule id="Q8WXX0-4"/>
    <property type="protein sequence ID" value="ENSP00000386260.1"/>
    <property type="gene ID" value="ENSG00000118997.14"/>
</dbReference>
<dbReference type="GeneID" id="56171"/>
<dbReference type="KEGG" id="hsa:56171"/>
<dbReference type="MANE-Select" id="ENST00000312428.11">
    <property type="protein sequence ID" value="ENSP00000311273.6"/>
    <property type="RefSeq nucleotide sequence ID" value="NM_018897.3"/>
    <property type="RefSeq protein sequence ID" value="NP_061720.2"/>
</dbReference>
<dbReference type="UCSC" id="uc002uti.5">
    <molecule id="Q8WXX0-1"/>
    <property type="organism name" value="human"/>
</dbReference>
<dbReference type="AGR" id="HGNC:18661"/>
<dbReference type="CTD" id="56171"/>
<dbReference type="DisGeNET" id="56171"/>
<dbReference type="GeneCards" id="DNAH7"/>
<dbReference type="HGNC" id="HGNC:18661">
    <property type="gene designation" value="DNAH7"/>
</dbReference>
<dbReference type="HPA" id="ENSG00000118997">
    <property type="expression patterns" value="Tissue enhanced (choroid plexus, testis)"/>
</dbReference>
<dbReference type="MalaCards" id="DNAH7"/>
<dbReference type="MIM" id="610061">
    <property type="type" value="gene"/>
</dbReference>
<dbReference type="MIM" id="620356">
    <property type="type" value="phenotype"/>
</dbReference>
<dbReference type="neXtProt" id="NX_Q8WXX0"/>
<dbReference type="OpenTargets" id="ENSG00000118997"/>
<dbReference type="PharmGKB" id="PA38625"/>
<dbReference type="VEuPathDB" id="HostDB:ENSG00000118997"/>
<dbReference type="eggNOG" id="KOG3595">
    <property type="taxonomic scope" value="Eukaryota"/>
</dbReference>
<dbReference type="GeneTree" id="ENSGT00940000155282"/>
<dbReference type="HOGENOM" id="CLU_000038_1_3_1"/>
<dbReference type="InParanoid" id="Q8WXX0"/>
<dbReference type="OMA" id="FHDSPYA"/>
<dbReference type="OrthoDB" id="5593012at2759"/>
<dbReference type="PAN-GO" id="Q8WXX0">
    <property type="GO annotations" value="5 GO annotations based on evolutionary models"/>
</dbReference>
<dbReference type="PhylomeDB" id="Q8WXX0"/>
<dbReference type="TreeFam" id="TF316836"/>
<dbReference type="PathwayCommons" id="Q8WXX0"/>
<dbReference type="SignaLink" id="Q8WXX0"/>
<dbReference type="BioGRID-ORCS" id="56171">
    <property type="hits" value="8 hits in 1145 CRISPR screens"/>
</dbReference>
<dbReference type="ChiTaRS" id="DNAH7">
    <property type="organism name" value="human"/>
</dbReference>
<dbReference type="GenomeRNAi" id="56171"/>
<dbReference type="Pharos" id="Q8WXX0">
    <property type="development level" value="Tbio"/>
</dbReference>
<dbReference type="PRO" id="PR:Q8WXX0"/>
<dbReference type="Proteomes" id="UP000005640">
    <property type="component" value="Chromosome 2"/>
</dbReference>
<dbReference type="RNAct" id="Q8WXX0">
    <property type="molecule type" value="protein"/>
</dbReference>
<dbReference type="Bgee" id="ENSG00000118997">
    <property type="expression patterns" value="Expressed in right uterine tube and 146 other cell types or tissues"/>
</dbReference>
<dbReference type="ExpressionAtlas" id="Q8WXX0">
    <property type="expression patterns" value="baseline and differential"/>
</dbReference>
<dbReference type="GO" id="GO:0097729">
    <property type="term" value="C:9+2 motile cilium"/>
    <property type="evidence" value="ECO:0000318"/>
    <property type="project" value="GO_Central"/>
</dbReference>
<dbReference type="GO" id="GO:0005858">
    <property type="term" value="C:axonemal dynein complex"/>
    <property type="evidence" value="ECO:0000303"/>
    <property type="project" value="UniProtKB"/>
</dbReference>
<dbReference type="GO" id="GO:0005929">
    <property type="term" value="C:cilium"/>
    <property type="evidence" value="ECO:0000314"/>
    <property type="project" value="MGI"/>
</dbReference>
<dbReference type="GO" id="GO:0036156">
    <property type="term" value="C:inner dynein arm"/>
    <property type="evidence" value="ECO:0000315"/>
    <property type="project" value="SYSCILIA_CCNET"/>
</dbReference>
<dbReference type="GO" id="GO:0005874">
    <property type="term" value="C:microtubule"/>
    <property type="evidence" value="ECO:0007669"/>
    <property type="project" value="UniProtKB-KW"/>
</dbReference>
<dbReference type="GO" id="GO:0005524">
    <property type="term" value="F:ATP binding"/>
    <property type="evidence" value="ECO:0007669"/>
    <property type="project" value="UniProtKB-KW"/>
</dbReference>
<dbReference type="GO" id="GO:0016887">
    <property type="term" value="F:ATP hydrolysis activity"/>
    <property type="evidence" value="ECO:0007669"/>
    <property type="project" value="InterPro"/>
</dbReference>
<dbReference type="GO" id="GO:0005509">
    <property type="term" value="F:calcium ion binding"/>
    <property type="evidence" value="ECO:0007669"/>
    <property type="project" value="InterPro"/>
</dbReference>
<dbReference type="GO" id="GO:0045505">
    <property type="term" value="F:dynein intermediate chain binding"/>
    <property type="evidence" value="ECO:0000318"/>
    <property type="project" value="GO_Central"/>
</dbReference>
<dbReference type="GO" id="GO:0051959">
    <property type="term" value="F:dynein light intermediate chain binding"/>
    <property type="evidence" value="ECO:0000318"/>
    <property type="project" value="GO_Central"/>
</dbReference>
<dbReference type="GO" id="GO:0003777">
    <property type="term" value="F:microtubule motor activity"/>
    <property type="evidence" value="ECO:0000303"/>
    <property type="project" value="UniProtKB"/>
</dbReference>
<dbReference type="GO" id="GO:0008569">
    <property type="term" value="F:minus-end-directed microtubule motor activity"/>
    <property type="evidence" value="ECO:0000318"/>
    <property type="project" value="GO_Central"/>
</dbReference>
<dbReference type="GO" id="GO:0003341">
    <property type="term" value="P:cilium movement"/>
    <property type="evidence" value="ECO:0000315"/>
    <property type="project" value="SYSCILIA_CCNET"/>
</dbReference>
<dbReference type="GO" id="GO:0060294">
    <property type="term" value="P:cilium movement involved in cell motility"/>
    <property type="evidence" value="ECO:0000318"/>
    <property type="project" value="GO_Central"/>
</dbReference>
<dbReference type="GO" id="GO:0060285">
    <property type="term" value="P:cilium-dependent cell motility"/>
    <property type="evidence" value="ECO:0000303"/>
    <property type="project" value="UniProtKB"/>
</dbReference>
<dbReference type="GO" id="GO:0036159">
    <property type="term" value="P:inner dynein arm assembly"/>
    <property type="evidence" value="ECO:0000315"/>
    <property type="project" value="SYSCILIA_CCNET"/>
</dbReference>
<dbReference type="FunFam" id="1.20.920.30:FF:000002">
    <property type="entry name" value="Dynein axonemal heavy chain 3"/>
    <property type="match status" value="1"/>
</dbReference>
<dbReference type="FunFam" id="1.10.8.1220:FF:000001">
    <property type="entry name" value="Dynein axonemal heavy chain 5"/>
    <property type="match status" value="1"/>
</dbReference>
<dbReference type="FunFam" id="1.10.8.710:FF:000004">
    <property type="entry name" value="Dynein axonemal heavy chain 6"/>
    <property type="match status" value="1"/>
</dbReference>
<dbReference type="FunFam" id="1.20.140.100:FF:000004">
    <property type="entry name" value="Dynein axonemal heavy chain 6"/>
    <property type="match status" value="1"/>
</dbReference>
<dbReference type="FunFam" id="1.10.472.130:FF:000005">
    <property type="entry name" value="Dynein axonemal heavy chain 7"/>
    <property type="match status" value="1"/>
</dbReference>
<dbReference type="FunFam" id="3.40.50.300:FF:002141">
    <property type="entry name" value="Dynein heavy chain"/>
    <property type="match status" value="1"/>
</dbReference>
<dbReference type="FunFam" id="3.20.180.20:FF:000003">
    <property type="entry name" value="Dynein heavy chain 12, axonemal"/>
    <property type="match status" value="1"/>
</dbReference>
<dbReference type="FunFam" id="1.10.287.2620:FF:000002">
    <property type="entry name" value="Dynein heavy chain 2, axonemal"/>
    <property type="match status" value="1"/>
</dbReference>
<dbReference type="FunFam" id="3.40.50.300:FF:000223">
    <property type="entry name" value="Dynein heavy chain 3, axonemal"/>
    <property type="match status" value="1"/>
</dbReference>
<dbReference type="FunFam" id="3.40.50.300:FF:000044">
    <property type="entry name" value="Dynein heavy chain 5, axonemal"/>
    <property type="match status" value="1"/>
</dbReference>
<dbReference type="FunFam" id="3.40.50.300:FF:001328">
    <property type="entry name" value="Dynein heavy chain 6, axonemal"/>
    <property type="match status" value="1"/>
</dbReference>
<dbReference type="FunFam" id="1.10.8.720:FF:000001">
    <property type="entry name" value="dynein heavy chain 7, axonemal"/>
    <property type="match status" value="1"/>
</dbReference>
<dbReference type="FunFam" id="1.20.1270.280:FF:000001">
    <property type="entry name" value="dynein heavy chain 7, axonemal"/>
    <property type="match status" value="1"/>
</dbReference>
<dbReference type="FunFam" id="3.10.490.20:FF:000001">
    <property type="entry name" value="dynein heavy chain 7, axonemal"/>
    <property type="match status" value="1"/>
</dbReference>
<dbReference type="FunFam" id="1.20.58.1120:FF:000005">
    <property type="entry name" value="Dynein, axonemal, heavy chain 12"/>
    <property type="match status" value="1"/>
</dbReference>
<dbReference type="FunFam" id="1.20.920.20:FF:000006">
    <property type="entry name" value="Dynein, axonemal, heavy chain 6"/>
    <property type="match status" value="1"/>
</dbReference>
<dbReference type="FunFam" id="3.40.50.300:FF:000362">
    <property type="entry name" value="Dynein, axonemal, heavy chain 6"/>
    <property type="match status" value="1"/>
</dbReference>
<dbReference type="Gene3D" id="1.10.287.2620">
    <property type="match status" value="1"/>
</dbReference>
<dbReference type="Gene3D" id="1.10.472.130">
    <property type="match status" value="1"/>
</dbReference>
<dbReference type="Gene3D" id="1.10.8.1220">
    <property type="match status" value="1"/>
</dbReference>
<dbReference type="Gene3D" id="1.10.8.710">
    <property type="match status" value="1"/>
</dbReference>
<dbReference type="Gene3D" id="1.20.1270.280">
    <property type="match status" value="1"/>
</dbReference>
<dbReference type="Gene3D" id="1.20.58.1120">
    <property type="match status" value="1"/>
</dbReference>
<dbReference type="Gene3D" id="1.20.920.20">
    <property type="match status" value="1"/>
</dbReference>
<dbReference type="Gene3D" id="1.20.920.30">
    <property type="match status" value="1"/>
</dbReference>
<dbReference type="Gene3D" id="3.10.490.20">
    <property type="match status" value="1"/>
</dbReference>
<dbReference type="Gene3D" id="6.10.140.1060">
    <property type="match status" value="1"/>
</dbReference>
<dbReference type="Gene3D" id="1.20.140.100">
    <property type="entry name" value="Dynein heavy chain, N-terminal domain 2"/>
    <property type="match status" value="1"/>
</dbReference>
<dbReference type="Gene3D" id="3.20.180.20">
    <property type="entry name" value="Dynein heavy chain, N-terminal domain 2"/>
    <property type="match status" value="1"/>
</dbReference>
<dbReference type="Gene3D" id="3.40.50.300">
    <property type="entry name" value="P-loop containing nucleotide triphosphate hydrolases"/>
    <property type="match status" value="5"/>
</dbReference>
<dbReference type="Gene3D" id="1.10.8.720">
    <property type="entry name" value="Region D6 of dynein motor"/>
    <property type="match status" value="1"/>
</dbReference>
<dbReference type="InterPro" id="IPR003593">
    <property type="entry name" value="AAA+_ATPase"/>
</dbReference>
<dbReference type="InterPro" id="IPR035699">
    <property type="entry name" value="AAA_6"/>
</dbReference>
<dbReference type="InterPro" id="IPR035706">
    <property type="entry name" value="AAA_9"/>
</dbReference>
<dbReference type="InterPro" id="IPR041658">
    <property type="entry name" value="AAA_lid_11"/>
</dbReference>
<dbReference type="InterPro" id="IPR042219">
    <property type="entry name" value="AAA_lid_11_sf"/>
</dbReference>
<dbReference type="InterPro" id="IPR026983">
    <property type="entry name" value="DHC"/>
</dbReference>
<dbReference type="InterPro" id="IPR041589">
    <property type="entry name" value="DNAH3_AAA_lid_1"/>
</dbReference>
<dbReference type="InterPro" id="IPR042222">
    <property type="entry name" value="Dynein_2_N"/>
</dbReference>
<dbReference type="InterPro" id="IPR043157">
    <property type="entry name" value="Dynein_AAA1S"/>
</dbReference>
<dbReference type="InterPro" id="IPR041466">
    <property type="entry name" value="Dynein_AAA5_ext"/>
</dbReference>
<dbReference type="InterPro" id="IPR041228">
    <property type="entry name" value="Dynein_C"/>
</dbReference>
<dbReference type="InterPro" id="IPR043160">
    <property type="entry name" value="Dynein_C_barrel"/>
</dbReference>
<dbReference type="InterPro" id="IPR024743">
    <property type="entry name" value="Dynein_HC_stalk"/>
</dbReference>
<dbReference type="InterPro" id="IPR024317">
    <property type="entry name" value="Dynein_heavy_chain_D4_dom"/>
</dbReference>
<dbReference type="InterPro" id="IPR004273">
    <property type="entry name" value="Dynein_heavy_D6_P-loop"/>
</dbReference>
<dbReference type="InterPro" id="IPR013602">
    <property type="entry name" value="Dynein_heavy_linker"/>
</dbReference>
<dbReference type="InterPro" id="IPR042228">
    <property type="entry name" value="Dynein_linker_3"/>
</dbReference>
<dbReference type="InterPro" id="IPR018247">
    <property type="entry name" value="EF_Hand_1_Ca_BS"/>
</dbReference>
<dbReference type="InterPro" id="IPR002048">
    <property type="entry name" value="EF_hand_dom"/>
</dbReference>
<dbReference type="InterPro" id="IPR027417">
    <property type="entry name" value="P-loop_NTPase"/>
</dbReference>
<dbReference type="PANTHER" id="PTHR22878:SF66">
    <property type="entry name" value="DYNEIN AXONEMAL HEAVY CHAIN 7"/>
    <property type="match status" value="1"/>
</dbReference>
<dbReference type="PANTHER" id="PTHR22878">
    <property type="entry name" value="DYNEIN HEAVY CHAIN 6, AXONEMAL-LIKE-RELATED"/>
    <property type="match status" value="1"/>
</dbReference>
<dbReference type="Pfam" id="PF12774">
    <property type="entry name" value="AAA_6"/>
    <property type="match status" value="1"/>
</dbReference>
<dbReference type="Pfam" id="PF12775">
    <property type="entry name" value="AAA_7"/>
    <property type="match status" value="1"/>
</dbReference>
<dbReference type="Pfam" id="PF12780">
    <property type="entry name" value="AAA_8"/>
    <property type="match status" value="1"/>
</dbReference>
<dbReference type="Pfam" id="PF12781">
    <property type="entry name" value="AAA_9"/>
    <property type="match status" value="1"/>
</dbReference>
<dbReference type="Pfam" id="PF17857">
    <property type="entry name" value="AAA_lid_1"/>
    <property type="match status" value="1"/>
</dbReference>
<dbReference type="Pfam" id="PF18198">
    <property type="entry name" value="AAA_lid_11"/>
    <property type="match status" value="1"/>
</dbReference>
<dbReference type="Pfam" id="PF08393">
    <property type="entry name" value="DHC_N2"/>
    <property type="match status" value="1"/>
</dbReference>
<dbReference type="Pfam" id="PF17852">
    <property type="entry name" value="Dynein_AAA_lid"/>
    <property type="match status" value="1"/>
</dbReference>
<dbReference type="Pfam" id="PF18199">
    <property type="entry name" value="Dynein_C"/>
    <property type="match status" value="1"/>
</dbReference>
<dbReference type="Pfam" id="PF03028">
    <property type="entry name" value="Dynein_heavy"/>
    <property type="match status" value="1"/>
</dbReference>
<dbReference type="Pfam" id="PF12777">
    <property type="entry name" value="MT"/>
    <property type="match status" value="1"/>
</dbReference>
<dbReference type="SMART" id="SM00382">
    <property type="entry name" value="AAA"/>
    <property type="match status" value="2"/>
</dbReference>
<dbReference type="SUPFAM" id="SSF52540">
    <property type="entry name" value="P-loop containing nucleoside triphosphate hydrolases"/>
    <property type="match status" value="4"/>
</dbReference>
<organism>
    <name type="scientific">Homo sapiens</name>
    <name type="common">Human</name>
    <dbReference type="NCBI Taxonomy" id="9606"/>
    <lineage>
        <taxon>Eukaryota</taxon>
        <taxon>Metazoa</taxon>
        <taxon>Chordata</taxon>
        <taxon>Craniata</taxon>
        <taxon>Vertebrata</taxon>
        <taxon>Euteleostomi</taxon>
        <taxon>Mammalia</taxon>
        <taxon>Eutheria</taxon>
        <taxon>Euarchontoglires</taxon>
        <taxon>Primates</taxon>
        <taxon>Haplorrhini</taxon>
        <taxon>Catarrhini</taxon>
        <taxon>Hominidae</taxon>
        <taxon>Homo</taxon>
    </lineage>
</organism>
<gene>
    <name type="primary">DNAH7</name>
    <name type="synonym">KIAA0944</name>
</gene>
<reference key="1">
    <citation type="journal article" date="2002" name="J. Biol. Chem.">
        <title>Identification of dynein heavy chain 7 as an inner arm component of human cilia that is synthesized but not assembled in a case of primary ciliary dyskinesia.</title>
        <authorList>
            <person name="Zhang Y.J."/>
            <person name="O'Neal W.K."/>
            <person name="Randell S.H."/>
            <person name="Blackburn K."/>
            <person name="Moyer M.B."/>
            <person name="Boucher R.C."/>
            <person name="Ostrowski L.E."/>
        </authorList>
    </citation>
    <scope>NUCLEOTIDE SEQUENCE [MRNA] (ISOFORM 1)</scope>
    <scope>IDENTIFICATION BY MASS SPECTROMETRY</scope>
    <scope>SUBCELLULAR LOCATION</scope>
    <scope>INDUCTION</scope>
    <scope>TISSUE SPECIFICITY</scope>
    <scope>VARIANT PRO-3319</scope>
    <source>
        <tissue>Tracheobronchial epithelium</tissue>
    </source>
</reference>
<reference key="2">
    <citation type="journal article" date="1999" name="DNA Res.">
        <title>Prediction of the coding sequences of unidentified human genes. XIII. The complete sequences of 100 new cDNA clones from brain which code for large proteins in vitro.</title>
        <authorList>
            <person name="Nagase T."/>
            <person name="Ishikawa K."/>
            <person name="Suyama M."/>
            <person name="Kikuno R."/>
            <person name="Hirosawa M."/>
            <person name="Miyajima N."/>
            <person name="Tanaka A."/>
            <person name="Kotani H."/>
            <person name="Nomura N."/>
            <person name="Ohara O."/>
        </authorList>
    </citation>
    <scope>NUCLEOTIDE SEQUENCE [LARGE SCALE MRNA] (ISOFORM 1)</scope>
    <scope>VARIANTS CYS-545 AND PRO-3319</scope>
    <source>
        <tissue>Brain</tissue>
    </source>
</reference>
<reference key="3">
    <citation type="submission" date="2003-01" db="EMBL/GenBank/DDBJ databases">
        <authorList>
            <person name="Nagase T."/>
            <person name="Kikuno R."/>
            <person name="Yamakawa H."/>
            <person name="Ohara O."/>
        </authorList>
    </citation>
    <scope>SEQUENCE REVISION</scope>
</reference>
<reference key="4">
    <citation type="journal article" date="2004" name="Nat. Genet.">
        <title>Complete sequencing and characterization of 21,243 full-length human cDNAs.</title>
        <authorList>
            <person name="Ota T."/>
            <person name="Suzuki Y."/>
            <person name="Nishikawa T."/>
            <person name="Otsuki T."/>
            <person name="Sugiyama T."/>
            <person name="Irie R."/>
            <person name="Wakamatsu A."/>
            <person name="Hayashi K."/>
            <person name="Sato H."/>
            <person name="Nagai K."/>
            <person name="Kimura K."/>
            <person name="Makita H."/>
            <person name="Sekine M."/>
            <person name="Obayashi M."/>
            <person name="Nishi T."/>
            <person name="Shibahara T."/>
            <person name="Tanaka T."/>
            <person name="Ishii S."/>
            <person name="Yamamoto J."/>
            <person name="Saito K."/>
            <person name="Kawai Y."/>
            <person name="Isono Y."/>
            <person name="Nakamura Y."/>
            <person name="Nagahari K."/>
            <person name="Murakami K."/>
            <person name="Yasuda T."/>
            <person name="Iwayanagi T."/>
            <person name="Wagatsuma M."/>
            <person name="Shiratori A."/>
            <person name="Sudo H."/>
            <person name="Hosoiri T."/>
            <person name="Kaku Y."/>
            <person name="Kodaira H."/>
            <person name="Kondo H."/>
            <person name="Sugawara M."/>
            <person name="Takahashi M."/>
            <person name="Kanda K."/>
            <person name="Yokoi T."/>
            <person name="Furuya T."/>
            <person name="Kikkawa E."/>
            <person name="Omura Y."/>
            <person name="Abe K."/>
            <person name="Kamihara K."/>
            <person name="Katsuta N."/>
            <person name="Sato K."/>
            <person name="Tanikawa M."/>
            <person name="Yamazaki M."/>
            <person name="Ninomiya K."/>
            <person name="Ishibashi T."/>
            <person name="Yamashita H."/>
            <person name="Murakawa K."/>
            <person name="Fujimori K."/>
            <person name="Tanai H."/>
            <person name="Kimata M."/>
            <person name="Watanabe M."/>
            <person name="Hiraoka S."/>
            <person name="Chiba Y."/>
            <person name="Ishida S."/>
            <person name="Ono Y."/>
            <person name="Takiguchi S."/>
            <person name="Watanabe S."/>
            <person name="Yosida M."/>
            <person name="Hotuta T."/>
            <person name="Kusano J."/>
            <person name="Kanehori K."/>
            <person name="Takahashi-Fujii A."/>
            <person name="Hara H."/>
            <person name="Tanase T.-O."/>
            <person name="Nomura Y."/>
            <person name="Togiya S."/>
            <person name="Komai F."/>
            <person name="Hara R."/>
            <person name="Takeuchi K."/>
            <person name="Arita M."/>
            <person name="Imose N."/>
            <person name="Musashino K."/>
            <person name="Yuuki H."/>
            <person name="Oshima A."/>
            <person name="Sasaki N."/>
            <person name="Aotsuka S."/>
            <person name="Yoshikawa Y."/>
            <person name="Matsunawa H."/>
            <person name="Ichihara T."/>
            <person name="Shiohata N."/>
            <person name="Sano S."/>
            <person name="Moriya S."/>
            <person name="Momiyama H."/>
            <person name="Satoh N."/>
            <person name="Takami S."/>
            <person name="Terashima Y."/>
            <person name="Suzuki O."/>
            <person name="Nakagawa S."/>
            <person name="Senoh A."/>
            <person name="Mizoguchi H."/>
            <person name="Goto Y."/>
            <person name="Shimizu F."/>
            <person name="Wakebe H."/>
            <person name="Hishigaki H."/>
            <person name="Watanabe T."/>
            <person name="Sugiyama A."/>
            <person name="Takemoto M."/>
            <person name="Kawakami B."/>
            <person name="Yamazaki M."/>
            <person name="Watanabe K."/>
            <person name="Kumagai A."/>
            <person name="Itakura S."/>
            <person name="Fukuzumi Y."/>
            <person name="Fujimori Y."/>
            <person name="Komiyama M."/>
            <person name="Tashiro H."/>
            <person name="Tanigami A."/>
            <person name="Fujiwara T."/>
            <person name="Ono T."/>
            <person name="Yamada K."/>
            <person name="Fujii Y."/>
            <person name="Ozaki K."/>
            <person name="Hirao M."/>
            <person name="Ohmori Y."/>
            <person name="Kawabata A."/>
            <person name="Hikiji T."/>
            <person name="Kobatake N."/>
            <person name="Inagaki H."/>
            <person name="Ikema Y."/>
            <person name="Okamoto S."/>
            <person name="Okitani R."/>
            <person name="Kawakami T."/>
            <person name="Noguchi S."/>
            <person name="Itoh T."/>
            <person name="Shigeta K."/>
            <person name="Senba T."/>
            <person name="Matsumura K."/>
            <person name="Nakajima Y."/>
            <person name="Mizuno T."/>
            <person name="Morinaga M."/>
            <person name="Sasaki M."/>
            <person name="Togashi T."/>
            <person name="Oyama M."/>
            <person name="Hata H."/>
            <person name="Watanabe M."/>
            <person name="Komatsu T."/>
            <person name="Mizushima-Sugano J."/>
            <person name="Satoh T."/>
            <person name="Shirai Y."/>
            <person name="Takahashi Y."/>
            <person name="Nakagawa K."/>
            <person name="Okumura K."/>
            <person name="Nagase T."/>
            <person name="Nomura N."/>
            <person name="Kikuchi H."/>
            <person name="Masuho Y."/>
            <person name="Yamashita R."/>
            <person name="Nakai K."/>
            <person name="Yada T."/>
            <person name="Nakamura Y."/>
            <person name="Ohara O."/>
            <person name="Isogai T."/>
            <person name="Sugano S."/>
        </authorList>
    </citation>
    <scope>NUCLEOTIDE SEQUENCE [LARGE SCALE MRNA] (ISOFORM 4)</scope>
    <source>
        <tissue>Brain cortex</tissue>
    </source>
</reference>
<reference key="5">
    <citation type="journal article" date="2007" name="BMC Genomics">
        <title>The full-ORF clone resource of the German cDNA consortium.</title>
        <authorList>
            <person name="Bechtel S."/>
            <person name="Rosenfelder H."/>
            <person name="Duda A."/>
            <person name="Schmidt C.P."/>
            <person name="Ernst U."/>
            <person name="Wellenreuther R."/>
            <person name="Mehrle A."/>
            <person name="Schuster C."/>
            <person name="Bahr A."/>
            <person name="Bloecker H."/>
            <person name="Heubner D."/>
            <person name="Hoerlein A."/>
            <person name="Michel G."/>
            <person name="Wedler H."/>
            <person name="Koehrer K."/>
            <person name="Ottenwaelder B."/>
            <person name="Poustka A."/>
            <person name="Wiemann S."/>
            <person name="Schupp I."/>
        </authorList>
    </citation>
    <scope>NUCLEOTIDE SEQUENCE [LARGE SCALE MRNA] (ISOFORM 3)</scope>
    <source>
        <tissue>Fetal kidney</tissue>
    </source>
</reference>
<reference key="6">
    <citation type="journal article" date="2005" name="Nature">
        <title>Generation and annotation of the DNA sequences of human chromosomes 2 and 4.</title>
        <authorList>
            <person name="Hillier L.W."/>
            <person name="Graves T.A."/>
            <person name="Fulton R.S."/>
            <person name="Fulton L.A."/>
            <person name="Pepin K.H."/>
            <person name="Minx P."/>
            <person name="Wagner-McPherson C."/>
            <person name="Layman D."/>
            <person name="Wylie K."/>
            <person name="Sekhon M."/>
            <person name="Becker M.C."/>
            <person name="Fewell G.A."/>
            <person name="Delehaunty K.D."/>
            <person name="Miner T.L."/>
            <person name="Nash W.E."/>
            <person name="Kremitzki C."/>
            <person name="Oddy L."/>
            <person name="Du H."/>
            <person name="Sun H."/>
            <person name="Bradshaw-Cordum H."/>
            <person name="Ali J."/>
            <person name="Carter J."/>
            <person name="Cordes M."/>
            <person name="Harris A."/>
            <person name="Isak A."/>
            <person name="van Brunt A."/>
            <person name="Nguyen C."/>
            <person name="Du F."/>
            <person name="Courtney L."/>
            <person name="Kalicki J."/>
            <person name="Ozersky P."/>
            <person name="Abbott S."/>
            <person name="Armstrong J."/>
            <person name="Belter E.A."/>
            <person name="Caruso L."/>
            <person name="Cedroni M."/>
            <person name="Cotton M."/>
            <person name="Davidson T."/>
            <person name="Desai A."/>
            <person name="Elliott G."/>
            <person name="Erb T."/>
            <person name="Fronick C."/>
            <person name="Gaige T."/>
            <person name="Haakenson W."/>
            <person name="Haglund K."/>
            <person name="Holmes A."/>
            <person name="Harkins R."/>
            <person name="Kim K."/>
            <person name="Kruchowski S.S."/>
            <person name="Strong C.M."/>
            <person name="Grewal N."/>
            <person name="Goyea E."/>
            <person name="Hou S."/>
            <person name="Levy A."/>
            <person name="Martinka S."/>
            <person name="Mead K."/>
            <person name="McLellan M.D."/>
            <person name="Meyer R."/>
            <person name="Randall-Maher J."/>
            <person name="Tomlinson C."/>
            <person name="Dauphin-Kohlberg S."/>
            <person name="Kozlowicz-Reilly A."/>
            <person name="Shah N."/>
            <person name="Swearengen-Shahid S."/>
            <person name="Snider J."/>
            <person name="Strong J.T."/>
            <person name="Thompson J."/>
            <person name="Yoakum M."/>
            <person name="Leonard S."/>
            <person name="Pearman C."/>
            <person name="Trani L."/>
            <person name="Radionenko M."/>
            <person name="Waligorski J.E."/>
            <person name="Wang C."/>
            <person name="Rock S.M."/>
            <person name="Tin-Wollam A.-M."/>
            <person name="Maupin R."/>
            <person name="Latreille P."/>
            <person name="Wendl M.C."/>
            <person name="Yang S.-P."/>
            <person name="Pohl C."/>
            <person name="Wallis J.W."/>
            <person name="Spieth J."/>
            <person name="Bieri T.A."/>
            <person name="Berkowicz N."/>
            <person name="Nelson J.O."/>
            <person name="Osborne J."/>
            <person name="Ding L."/>
            <person name="Meyer R."/>
            <person name="Sabo A."/>
            <person name="Shotland Y."/>
            <person name="Sinha P."/>
            <person name="Wohldmann P.E."/>
            <person name="Cook L.L."/>
            <person name="Hickenbotham M.T."/>
            <person name="Eldred J."/>
            <person name="Williams D."/>
            <person name="Jones T.A."/>
            <person name="She X."/>
            <person name="Ciccarelli F.D."/>
            <person name="Izaurralde E."/>
            <person name="Taylor J."/>
            <person name="Schmutz J."/>
            <person name="Myers R.M."/>
            <person name="Cox D.R."/>
            <person name="Huang X."/>
            <person name="McPherson J.D."/>
            <person name="Mardis E.R."/>
            <person name="Clifton S.W."/>
            <person name="Warren W.C."/>
            <person name="Chinwalla A.T."/>
            <person name="Eddy S.R."/>
            <person name="Marra M.A."/>
            <person name="Ovcharenko I."/>
            <person name="Furey T.S."/>
            <person name="Miller W."/>
            <person name="Eichler E.E."/>
            <person name="Bork P."/>
            <person name="Suyama M."/>
            <person name="Torrents D."/>
            <person name="Waterston R.H."/>
            <person name="Wilson R.K."/>
        </authorList>
    </citation>
    <scope>NUCLEOTIDE SEQUENCE [LARGE SCALE GENOMIC DNA]</scope>
</reference>
<reference key="7">
    <citation type="journal article" date="2004" name="Genome Res.">
        <title>The status, quality, and expansion of the NIH full-length cDNA project: the Mammalian Gene Collection (MGC).</title>
        <authorList>
            <consortium name="The MGC Project Team"/>
        </authorList>
    </citation>
    <scope>NUCLEOTIDE SEQUENCE [LARGE SCALE MRNA] (ISOFORM 2)</scope>
    <source>
        <tissue>Testis</tissue>
    </source>
</reference>
<reference key="8">
    <citation type="journal article" date="2000" name="Eur. J. Hum. Genet.">
        <title>Identification, tissue specific expression, and chromosomal localisation of several human dynein heavy chain genes.</title>
        <authorList>
            <person name="Maiti A.K."/>
            <person name="Mattei M.-G."/>
            <person name="Jorissen M."/>
            <person name="Volz A."/>
            <person name="Zeigler A."/>
            <person name="Bouvagnet P."/>
        </authorList>
    </citation>
    <scope>NUCLEOTIDE SEQUENCE [MRNA] OF 1290-1432 (ISOFORM 1)</scope>
    <scope>NUCLEOTIDE SEQUENCE [GENOMIC DNA] OF 1356-1422 (ISOFORM 1)</scope>
    <scope>TISSUE SPECIFICITY</scope>
    <source>
        <tissue>Nasal polyp</tissue>
    </source>
</reference>
<reference key="9">
    <citation type="journal article" date="1997" name="Gene">
        <title>Identification of dynein heavy chain genes expressed in human and mouse testis: chromosomal localization of an axonemal dynein gene.</title>
        <authorList>
            <person name="Neesen J."/>
            <person name="Koehler M.R."/>
            <person name="Kirschner R."/>
            <person name="Steinlein C."/>
            <person name="Kreutzberger J."/>
            <person name="Engel W."/>
            <person name="Schmid M."/>
        </authorList>
    </citation>
    <scope>NUCLEOTIDE SEQUENCE [MRNA] OF 1333-1503 (ISOFORM 1)</scope>
    <source>
        <tissue>Testis</tissue>
    </source>
</reference>
<reference key="10">
    <citation type="journal article" date="2021" name="Acta Biochim. Biophys. Sin.">
        <title>Bi-allelic mutations in DNAH7 cause asthenozoospermia by impairing the integrality of axoneme structure.</title>
        <authorList>
            <person name="Wei X."/>
            <person name="Sha Y."/>
            <person name="Wei Z."/>
            <person name="Zhu X."/>
            <person name="He F."/>
            <person name="Zhang X."/>
            <person name="Liu W."/>
            <person name="Wang Y."/>
            <person name="Lu Z."/>
        </authorList>
    </citation>
    <scope>FUNCTION</scope>
    <scope>SUBCELLULAR LOCATION</scope>
    <scope>INVOLVEMENT IN CILD50</scope>
    <scope>VARIANTS CILD50 ASN-1863; ILE-2164; HIS-3204; SER-3464 AND ARG-3534</scope>
</reference>
<reference key="11">
    <citation type="journal article" date="2022" name="Clin. Genet.">
        <title>Loss of function mutation in DNAH7 induces male infertility associated with abnormalities of the sperm flagella and mitochondria in human.</title>
        <authorList>
            <person name="Gao Y."/>
            <person name="Liu L."/>
            <person name="Shen Q."/>
            <person name="Fu F."/>
            <person name="Xu C."/>
            <person name="Geng H."/>
            <person name="Lv M."/>
            <person name="Li K."/>
            <person name="Tang D."/>
            <person name="Song B."/>
            <person name="Wu H."/>
            <person name="Xu Y."/>
            <person name="Zhang Y."/>
            <person name="Tao F."/>
            <person name="Zhou P."/>
            <person name="Wei Z."/>
            <person name="He X."/>
            <person name="Cao Y."/>
        </authorList>
    </citation>
    <scope>INVOLVEMENT IN CILD50</scope>
</reference>
<evidence type="ECO:0000250" key="1"/>
<evidence type="ECO:0000255" key="2"/>
<evidence type="ECO:0000256" key="3">
    <source>
        <dbReference type="SAM" id="MobiDB-lite"/>
    </source>
</evidence>
<evidence type="ECO:0000269" key="4">
    <source>
    </source>
</evidence>
<evidence type="ECO:0000269" key="5">
    <source>
    </source>
</evidence>
<evidence type="ECO:0000269" key="6">
    <source>
    </source>
</evidence>
<evidence type="ECO:0000269" key="7">
    <source>
    </source>
</evidence>
<evidence type="ECO:0000269" key="8">
    <source>
    </source>
</evidence>
<evidence type="ECO:0000303" key="9">
    <source>
    </source>
</evidence>
<evidence type="ECO:0000303" key="10">
    <source>
    </source>
</evidence>
<evidence type="ECO:0000303" key="11">
    <source>
    </source>
</evidence>
<evidence type="ECO:0000305" key="12"/>
<accession>Q8WXX0</accession>
<accession>B8ZZX8</accession>
<accession>O00433</accession>
<accession>O95492</accession>
<accession>Q4G152</accession>
<accession>Q53QX7</accession>
<accession>Q53S64</accession>
<accession>Q53T02</accession>
<accession>Q68CY5</accession>
<accession>Q8N1Z2</accession>
<accession>Q9UMS3</accession>
<accession>Q9Y2F3</accession>
<protein>
    <recommendedName>
        <fullName>Dynein axonemal heavy chain 7</fullName>
    </recommendedName>
    <alternativeName>
        <fullName>Axonemal beta dynein heavy chain 7</fullName>
    </alternativeName>
    <alternativeName>
        <fullName>Ciliary dynein heavy chain 7</fullName>
    </alternativeName>
    <alternativeName>
        <fullName>Dynein heavy chain-like protein 2</fullName>
    </alternativeName>
    <alternativeName>
        <fullName>hDHC2</fullName>
    </alternativeName>
</protein>
<keyword id="KW-0002">3D-structure</keyword>
<keyword id="KW-0025">Alternative splicing</keyword>
<keyword id="KW-0067">ATP-binding</keyword>
<keyword id="KW-0966">Cell projection</keyword>
<keyword id="KW-1186">Ciliopathy</keyword>
<keyword id="KW-0969">Cilium</keyword>
<keyword id="KW-0175">Coiled coil</keyword>
<keyword id="KW-0963">Cytoplasm</keyword>
<keyword id="KW-0206">Cytoskeleton</keyword>
<keyword id="KW-0243">Dynein</keyword>
<keyword id="KW-0282">Flagellum</keyword>
<keyword id="KW-0493">Microtubule</keyword>
<keyword id="KW-0505">Motor protein</keyword>
<keyword id="KW-0547">Nucleotide-binding</keyword>
<keyword id="KW-0990">Primary ciliary dyskinesia</keyword>
<keyword id="KW-1267">Proteomics identification</keyword>
<keyword id="KW-1185">Reference proteome</keyword>
<keyword id="KW-0677">Repeat</keyword>